<keyword id="KW-0030">Aminoacyl-tRNA synthetase</keyword>
<keyword id="KW-0067">ATP-binding</keyword>
<keyword id="KW-0963">Cytoplasm</keyword>
<keyword id="KW-0436">Ligase</keyword>
<keyword id="KW-0547">Nucleotide-binding</keyword>
<keyword id="KW-0648">Protein biosynthesis</keyword>
<gene>
    <name evidence="1" type="primary">proS</name>
    <name type="ordered locus">NT01EI_0627</name>
</gene>
<feature type="chain" id="PRO_1000215528" description="Proline--tRNA ligase">
    <location>
        <begin position="1"/>
        <end position="572"/>
    </location>
</feature>
<evidence type="ECO:0000255" key="1">
    <source>
        <dbReference type="HAMAP-Rule" id="MF_01569"/>
    </source>
</evidence>
<proteinExistence type="inferred from homology"/>
<protein>
    <recommendedName>
        <fullName evidence="1">Proline--tRNA ligase</fullName>
        <ecNumber evidence="1">6.1.1.15</ecNumber>
    </recommendedName>
    <alternativeName>
        <fullName evidence="1">Prolyl-tRNA synthetase</fullName>
        <shortName evidence="1">ProRS</shortName>
    </alternativeName>
</protein>
<sequence>MRTSQYLLSTLKETPADAEVISHQLMLRAGMIRKLASGLYTWLPTGLRVLNKVENIVREEMNYAGAIEVSMPVVQPADLWQESGRWEQYGPELLRFVDRGDRPFVLGPTHEEVITDLVRNEISSYKQLPLNFYQIQTKFRDEVRPRFGVMRSREFLMKDAYSFHTTQESLQETYEAMYAAYSRIFSRMGLDFRAVQADTGSIGGNASHEFQVLAQSGEDDIVFSTASDYAANIELAEALAPATGRAAANQPMQLVNTPDARTIAELVEQHGLPIEKTVKTLLVHASEESGHALVALLVRGDHELNEVKAEKLALVASPLTFANEAEIRALVNAGPGSLGPVNLPLPIVADRAVAAMSDFGAGANIDGKHYFGINWERDAALPQIADIRNVIEGDPSPDGKGTLLIKRGIEVGHIFQLGTKYTEALNATVQGEDGRNQLMTMGCYGIGVTRVVAAAIEQNHDERGIIWPDAIAPFQVAILPMNMHKSFRVKEVAERLYDGLRAKGIEVLLDDRKERPGVMFADMELIGIPHTIVIGDRNLDNNEIEYKYRRSGDKLMISVDEIEAFLQAQIAR</sequence>
<dbReference type="EC" id="6.1.1.15" evidence="1"/>
<dbReference type="EMBL" id="CP001600">
    <property type="protein sequence ID" value="ACR67854.1"/>
    <property type="molecule type" value="Genomic_DNA"/>
</dbReference>
<dbReference type="RefSeq" id="WP_015870051.1">
    <property type="nucleotide sequence ID" value="NZ_CP169062.1"/>
</dbReference>
<dbReference type="SMR" id="C5B780"/>
<dbReference type="STRING" id="67780.B6E78_13830"/>
<dbReference type="GeneID" id="69537702"/>
<dbReference type="KEGG" id="eic:NT01EI_0627"/>
<dbReference type="PATRIC" id="fig|634503.3.peg.569"/>
<dbReference type="HOGENOM" id="CLU_016739_0_0_6"/>
<dbReference type="OrthoDB" id="9809052at2"/>
<dbReference type="Proteomes" id="UP000001485">
    <property type="component" value="Chromosome"/>
</dbReference>
<dbReference type="GO" id="GO:0005829">
    <property type="term" value="C:cytosol"/>
    <property type="evidence" value="ECO:0007669"/>
    <property type="project" value="TreeGrafter"/>
</dbReference>
<dbReference type="GO" id="GO:0002161">
    <property type="term" value="F:aminoacyl-tRNA deacylase activity"/>
    <property type="evidence" value="ECO:0007669"/>
    <property type="project" value="InterPro"/>
</dbReference>
<dbReference type="GO" id="GO:0005524">
    <property type="term" value="F:ATP binding"/>
    <property type="evidence" value="ECO:0007669"/>
    <property type="project" value="UniProtKB-UniRule"/>
</dbReference>
<dbReference type="GO" id="GO:0004827">
    <property type="term" value="F:proline-tRNA ligase activity"/>
    <property type="evidence" value="ECO:0007669"/>
    <property type="project" value="UniProtKB-UniRule"/>
</dbReference>
<dbReference type="GO" id="GO:0006433">
    <property type="term" value="P:prolyl-tRNA aminoacylation"/>
    <property type="evidence" value="ECO:0007669"/>
    <property type="project" value="UniProtKB-UniRule"/>
</dbReference>
<dbReference type="CDD" id="cd04334">
    <property type="entry name" value="ProRS-INS"/>
    <property type="match status" value="1"/>
</dbReference>
<dbReference type="CDD" id="cd00861">
    <property type="entry name" value="ProRS_anticodon_short"/>
    <property type="match status" value="1"/>
</dbReference>
<dbReference type="CDD" id="cd00779">
    <property type="entry name" value="ProRS_core_prok"/>
    <property type="match status" value="1"/>
</dbReference>
<dbReference type="FunFam" id="3.30.930.10:FF:000012">
    <property type="entry name" value="Proline--tRNA ligase"/>
    <property type="match status" value="1"/>
</dbReference>
<dbReference type="FunFam" id="3.30.930.10:FF:000097">
    <property type="entry name" value="Proline--tRNA ligase"/>
    <property type="match status" value="1"/>
</dbReference>
<dbReference type="FunFam" id="3.40.50.800:FF:000006">
    <property type="entry name" value="Proline--tRNA ligase"/>
    <property type="match status" value="1"/>
</dbReference>
<dbReference type="FunFam" id="3.90.960.10:FF:000001">
    <property type="entry name" value="Proline--tRNA ligase"/>
    <property type="match status" value="1"/>
</dbReference>
<dbReference type="Gene3D" id="3.40.50.800">
    <property type="entry name" value="Anticodon-binding domain"/>
    <property type="match status" value="1"/>
</dbReference>
<dbReference type="Gene3D" id="3.30.930.10">
    <property type="entry name" value="Bira Bifunctional Protein, Domain 2"/>
    <property type="match status" value="2"/>
</dbReference>
<dbReference type="HAMAP" id="MF_01569">
    <property type="entry name" value="Pro_tRNA_synth_type1"/>
    <property type="match status" value="1"/>
</dbReference>
<dbReference type="InterPro" id="IPR002314">
    <property type="entry name" value="aa-tRNA-synt_IIb"/>
</dbReference>
<dbReference type="InterPro" id="IPR006195">
    <property type="entry name" value="aa-tRNA-synth_II"/>
</dbReference>
<dbReference type="InterPro" id="IPR045864">
    <property type="entry name" value="aa-tRNA-synth_II/BPL/LPL"/>
</dbReference>
<dbReference type="InterPro" id="IPR004154">
    <property type="entry name" value="Anticodon-bd"/>
</dbReference>
<dbReference type="InterPro" id="IPR036621">
    <property type="entry name" value="Anticodon-bd_dom_sf"/>
</dbReference>
<dbReference type="InterPro" id="IPR002316">
    <property type="entry name" value="Pro-tRNA-ligase_IIa"/>
</dbReference>
<dbReference type="InterPro" id="IPR004500">
    <property type="entry name" value="Pro-tRNA-synth_IIa_bac-type"/>
</dbReference>
<dbReference type="InterPro" id="IPR023717">
    <property type="entry name" value="Pro-tRNA-Synthase_IIa_type1"/>
</dbReference>
<dbReference type="InterPro" id="IPR050062">
    <property type="entry name" value="Pro-tRNA_synthetase"/>
</dbReference>
<dbReference type="InterPro" id="IPR044140">
    <property type="entry name" value="ProRS_anticodon_short"/>
</dbReference>
<dbReference type="InterPro" id="IPR033730">
    <property type="entry name" value="ProRS_core_prok"/>
</dbReference>
<dbReference type="InterPro" id="IPR036754">
    <property type="entry name" value="YbaK/aa-tRNA-synt-asso_dom_sf"/>
</dbReference>
<dbReference type="InterPro" id="IPR007214">
    <property type="entry name" value="YbaK/aa-tRNA-synth-assoc-dom"/>
</dbReference>
<dbReference type="NCBIfam" id="NF006625">
    <property type="entry name" value="PRK09194.1"/>
    <property type="match status" value="1"/>
</dbReference>
<dbReference type="NCBIfam" id="TIGR00409">
    <property type="entry name" value="proS_fam_II"/>
    <property type="match status" value="1"/>
</dbReference>
<dbReference type="PANTHER" id="PTHR42753">
    <property type="entry name" value="MITOCHONDRIAL RIBOSOME PROTEIN L39/PROLYL-TRNA LIGASE FAMILY MEMBER"/>
    <property type="match status" value="1"/>
</dbReference>
<dbReference type="PANTHER" id="PTHR42753:SF2">
    <property type="entry name" value="PROLINE--TRNA LIGASE"/>
    <property type="match status" value="1"/>
</dbReference>
<dbReference type="Pfam" id="PF03129">
    <property type="entry name" value="HGTP_anticodon"/>
    <property type="match status" value="1"/>
</dbReference>
<dbReference type="Pfam" id="PF00587">
    <property type="entry name" value="tRNA-synt_2b"/>
    <property type="match status" value="1"/>
</dbReference>
<dbReference type="Pfam" id="PF04073">
    <property type="entry name" value="tRNA_edit"/>
    <property type="match status" value="1"/>
</dbReference>
<dbReference type="PIRSF" id="PIRSF001535">
    <property type="entry name" value="ProRS_1"/>
    <property type="match status" value="1"/>
</dbReference>
<dbReference type="PRINTS" id="PR01046">
    <property type="entry name" value="TRNASYNTHPRO"/>
</dbReference>
<dbReference type="SUPFAM" id="SSF52954">
    <property type="entry name" value="Class II aaRS ABD-related"/>
    <property type="match status" value="1"/>
</dbReference>
<dbReference type="SUPFAM" id="SSF55681">
    <property type="entry name" value="Class II aaRS and biotin synthetases"/>
    <property type="match status" value="1"/>
</dbReference>
<dbReference type="SUPFAM" id="SSF55826">
    <property type="entry name" value="YbaK/ProRS associated domain"/>
    <property type="match status" value="1"/>
</dbReference>
<dbReference type="PROSITE" id="PS50862">
    <property type="entry name" value="AA_TRNA_LIGASE_II"/>
    <property type="match status" value="1"/>
</dbReference>
<name>SYP_EDWI9</name>
<accession>C5B780</accession>
<organism>
    <name type="scientific">Edwardsiella ictaluri (strain 93-146)</name>
    <dbReference type="NCBI Taxonomy" id="634503"/>
    <lineage>
        <taxon>Bacteria</taxon>
        <taxon>Pseudomonadati</taxon>
        <taxon>Pseudomonadota</taxon>
        <taxon>Gammaproteobacteria</taxon>
        <taxon>Enterobacterales</taxon>
        <taxon>Hafniaceae</taxon>
        <taxon>Edwardsiella</taxon>
    </lineage>
</organism>
<comment type="function">
    <text evidence="1">Catalyzes the attachment of proline to tRNA(Pro) in a two-step reaction: proline is first activated by ATP to form Pro-AMP and then transferred to the acceptor end of tRNA(Pro). As ProRS can inadvertently accommodate and process non-cognate amino acids such as alanine and cysteine, to avoid such errors it has two additional distinct editing activities against alanine. One activity is designated as 'pretransfer' editing and involves the tRNA(Pro)-independent hydrolysis of activated Ala-AMP. The other activity is designated 'posttransfer' editing and involves deacylation of mischarged Ala-tRNA(Pro). The misacylated Cys-tRNA(Pro) is not edited by ProRS.</text>
</comment>
<comment type="catalytic activity">
    <reaction evidence="1">
        <text>tRNA(Pro) + L-proline + ATP = L-prolyl-tRNA(Pro) + AMP + diphosphate</text>
        <dbReference type="Rhea" id="RHEA:14305"/>
        <dbReference type="Rhea" id="RHEA-COMP:9700"/>
        <dbReference type="Rhea" id="RHEA-COMP:9702"/>
        <dbReference type="ChEBI" id="CHEBI:30616"/>
        <dbReference type="ChEBI" id="CHEBI:33019"/>
        <dbReference type="ChEBI" id="CHEBI:60039"/>
        <dbReference type="ChEBI" id="CHEBI:78442"/>
        <dbReference type="ChEBI" id="CHEBI:78532"/>
        <dbReference type="ChEBI" id="CHEBI:456215"/>
        <dbReference type="EC" id="6.1.1.15"/>
    </reaction>
</comment>
<comment type="subunit">
    <text evidence="1">Homodimer.</text>
</comment>
<comment type="subcellular location">
    <subcellularLocation>
        <location evidence="1">Cytoplasm</location>
    </subcellularLocation>
</comment>
<comment type="domain">
    <text evidence="1">Consists of three domains: the N-terminal catalytic domain, the editing domain and the C-terminal anticodon-binding domain.</text>
</comment>
<comment type="similarity">
    <text evidence="1">Belongs to the class-II aminoacyl-tRNA synthetase family. ProS type 1 subfamily.</text>
</comment>
<reference key="1">
    <citation type="submission" date="2009-03" db="EMBL/GenBank/DDBJ databases">
        <title>Complete genome sequence of Edwardsiella ictaluri 93-146.</title>
        <authorList>
            <person name="Williams M.L."/>
            <person name="Gillaspy A.F."/>
            <person name="Dyer D.W."/>
            <person name="Thune R.L."/>
            <person name="Waldbieser G.C."/>
            <person name="Schuster S.C."/>
            <person name="Gipson J."/>
            <person name="Zaitshik J."/>
            <person name="Landry C."/>
            <person name="Lawrence M.L."/>
        </authorList>
    </citation>
    <scope>NUCLEOTIDE SEQUENCE [LARGE SCALE GENOMIC DNA]</scope>
    <source>
        <strain>93-146</strain>
    </source>
</reference>